<protein>
    <recommendedName>
        <fullName evidence="1">Cytidylate kinase</fullName>
        <shortName evidence="1">CK</shortName>
        <ecNumber evidence="1">2.7.4.25</ecNumber>
    </recommendedName>
    <alternativeName>
        <fullName evidence="1">Cytidine monophosphate kinase</fullName>
        <shortName evidence="1">CMP kinase</shortName>
    </alternativeName>
</protein>
<gene>
    <name evidence="1" type="primary">cmk</name>
    <name type="ordered locus">DNO_0112</name>
</gene>
<reference key="1">
    <citation type="journal article" date="2007" name="Nat. Biotechnol.">
        <title>Genome sequence and identification of candidate vaccine antigens from the animal pathogen Dichelobacter nodosus.</title>
        <authorList>
            <person name="Myers G.S.A."/>
            <person name="Parker D."/>
            <person name="Al-Hasani K."/>
            <person name="Kennan R.M."/>
            <person name="Seemann T."/>
            <person name="Ren Q."/>
            <person name="Badger J.H."/>
            <person name="Selengut J.D."/>
            <person name="Deboy R.T."/>
            <person name="Tettelin H."/>
            <person name="Boyce J.D."/>
            <person name="McCarl V.P."/>
            <person name="Han X."/>
            <person name="Nelson W.C."/>
            <person name="Madupu R."/>
            <person name="Mohamoud Y."/>
            <person name="Holley T."/>
            <person name="Fedorova N."/>
            <person name="Khouri H."/>
            <person name="Bottomley S.P."/>
            <person name="Whittington R.J."/>
            <person name="Adler B."/>
            <person name="Songer J.G."/>
            <person name="Rood J.I."/>
            <person name="Paulsen I.T."/>
        </authorList>
    </citation>
    <scope>NUCLEOTIDE SEQUENCE [LARGE SCALE GENOMIC DNA]</scope>
    <source>
        <strain>VCS1703A</strain>
    </source>
</reference>
<organism>
    <name type="scientific">Dichelobacter nodosus (strain VCS1703A)</name>
    <dbReference type="NCBI Taxonomy" id="246195"/>
    <lineage>
        <taxon>Bacteria</taxon>
        <taxon>Pseudomonadati</taxon>
        <taxon>Pseudomonadota</taxon>
        <taxon>Gammaproteobacteria</taxon>
        <taxon>Cardiobacteriales</taxon>
        <taxon>Cardiobacteriaceae</taxon>
        <taxon>Dichelobacter</taxon>
    </lineage>
</organism>
<name>KCY_DICNV</name>
<accession>A5EWQ0</accession>
<sequence length="224" mass="24501">MRKIVTIDGPSGVGKGTVAQALARRHGWAYLDSGAVYRLAALFLKRQNLSLAATATQVAALQEMAVDFVMTETVVRVFLNGVAIDDVLRREETGALASQLAVKPEIRAALLDFQRNFAGDAPLIADGRDMGTVVFPEAPLKIFLDATAEIRAERRYKQLIEKGEDVTLAALKKEIAARDARDRNRLVAPLKPASDAVLIDTTDLSVQAVLEKIDALWQAHFFNF</sequence>
<comment type="catalytic activity">
    <reaction evidence="1">
        <text>CMP + ATP = CDP + ADP</text>
        <dbReference type="Rhea" id="RHEA:11600"/>
        <dbReference type="ChEBI" id="CHEBI:30616"/>
        <dbReference type="ChEBI" id="CHEBI:58069"/>
        <dbReference type="ChEBI" id="CHEBI:60377"/>
        <dbReference type="ChEBI" id="CHEBI:456216"/>
        <dbReference type="EC" id="2.7.4.25"/>
    </reaction>
</comment>
<comment type="catalytic activity">
    <reaction evidence="1">
        <text>dCMP + ATP = dCDP + ADP</text>
        <dbReference type="Rhea" id="RHEA:25094"/>
        <dbReference type="ChEBI" id="CHEBI:30616"/>
        <dbReference type="ChEBI" id="CHEBI:57566"/>
        <dbReference type="ChEBI" id="CHEBI:58593"/>
        <dbReference type="ChEBI" id="CHEBI:456216"/>
        <dbReference type="EC" id="2.7.4.25"/>
    </reaction>
</comment>
<comment type="subcellular location">
    <subcellularLocation>
        <location evidence="1">Cytoplasm</location>
    </subcellularLocation>
</comment>
<comment type="similarity">
    <text evidence="1">Belongs to the cytidylate kinase family. Type 1 subfamily.</text>
</comment>
<proteinExistence type="inferred from homology"/>
<dbReference type="EC" id="2.7.4.25" evidence="1"/>
<dbReference type="EMBL" id="CP000513">
    <property type="protein sequence ID" value="ABQ14130.1"/>
    <property type="molecule type" value="Genomic_DNA"/>
</dbReference>
<dbReference type="RefSeq" id="WP_011927863.1">
    <property type="nucleotide sequence ID" value="NC_009446.1"/>
</dbReference>
<dbReference type="SMR" id="A5EWQ0"/>
<dbReference type="STRING" id="246195.DNO_0112"/>
<dbReference type="KEGG" id="dno:DNO_0112"/>
<dbReference type="eggNOG" id="COG0283">
    <property type="taxonomic scope" value="Bacteria"/>
</dbReference>
<dbReference type="HOGENOM" id="CLU_079959_2_0_6"/>
<dbReference type="OrthoDB" id="9807434at2"/>
<dbReference type="Proteomes" id="UP000000248">
    <property type="component" value="Chromosome"/>
</dbReference>
<dbReference type="GO" id="GO:0005737">
    <property type="term" value="C:cytoplasm"/>
    <property type="evidence" value="ECO:0007669"/>
    <property type="project" value="UniProtKB-SubCell"/>
</dbReference>
<dbReference type="GO" id="GO:0005524">
    <property type="term" value="F:ATP binding"/>
    <property type="evidence" value="ECO:0007669"/>
    <property type="project" value="UniProtKB-UniRule"/>
</dbReference>
<dbReference type="GO" id="GO:0036430">
    <property type="term" value="F:CMP kinase activity"/>
    <property type="evidence" value="ECO:0007669"/>
    <property type="project" value="RHEA"/>
</dbReference>
<dbReference type="GO" id="GO:0036431">
    <property type="term" value="F:dCMP kinase activity"/>
    <property type="evidence" value="ECO:0007669"/>
    <property type="project" value="RHEA"/>
</dbReference>
<dbReference type="GO" id="GO:0006220">
    <property type="term" value="P:pyrimidine nucleotide metabolic process"/>
    <property type="evidence" value="ECO:0007669"/>
    <property type="project" value="UniProtKB-UniRule"/>
</dbReference>
<dbReference type="CDD" id="cd02020">
    <property type="entry name" value="CMPK"/>
    <property type="match status" value="1"/>
</dbReference>
<dbReference type="Gene3D" id="3.40.50.300">
    <property type="entry name" value="P-loop containing nucleotide triphosphate hydrolases"/>
    <property type="match status" value="1"/>
</dbReference>
<dbReference type="HAMAP" id="MF_00238">
    <property type="entry name" value="Cytidyl_kinase_type1"/>
    <property type="match status" value="1"/>
</dbReference>
<dbReference type="InterPro" id="IPR003136">
    <property type="entry name" value="Cytidylate_kin"/>
</dbReference>
<dbReference type="InterPro" id="IPR011994">
    <property type="entry name" value="Cytidylate_kinase_dom"/>
</dbReference>
<dbReference type="InterPro" id="IPR027417">
    <property type="entry name" value="P-loop_NTPase"/>
</dbReference>
<dbReference type="NCBIfam" id="TIGR00017">
    <property type="entry name" value="cmk"/>
    <property type="match status" value="1"/>
</dbReference>
<dbReference type="Pfam" id="PF02224">
    <property type="entry name" value="Cytidylate_kin"/>
    <property type="match status" value="1"/>
</dbReference>
<dbReference type="SUPFAM" id="SSF52540">
    <property type="entry name" value="P-loop containing nucleoside triphosphate hydrolases"/>
    <property type="match status" value="1"/>
</dbReference>
<evidence type="ECO:0000255" key="1">
    <source>
        <dbReference type="HAMAP-Rule" id="MF_00238"/>
    </source>
</evidence>
<keyword id="KW-0067">ATP-binding</keyword>
<keyword id="KW-0963">Cytoplasm</keyword>
<keyword id="KW-0418">Kinase</keyword>
<keyword id="KW-0547">Nucleotide-binding</keyword>
<keyword id="KW-1185">Reference proteome</keyword>
<keyword id="KW-0808">Transferase</keyword>
<feature type="chain" id="PRO_1000078336" description="Cytidylate kinase">
    <location>
        <begin position="1"/>
        <end position="224"/>
    </location>
</feature>
<feature type="binding site" evidence="1">
    <location>
        <begin position="9"/>
        <end position="17"/>
    </location>
    <ligand>
        <name>ATP</name>
        <dbReference type="ChEBI" id="CHEBI:30616"/>
    </ligand>
</feature>